<evidence type="ECO:0000250" key="1"/>
<evidence type="ECO:0000255" key="2"/>
<evidence type="ECO:0000305" key="3"/>
<sequence>MAKKNTKKDNKNQNLRCPIVCVLGHVDHGKCLMPHEKVLTEYGEIKIEDLFKIGKEIVEKDELKEIRKLNIKVHTLNENGEIKIINAPYVWKLKHKGKMIKVKLKNWHSITTTPEHPFLTNNGWIKAENIKKGMYVAIPRKIYGNEDFEKFIEFINSKILTNELIVKVNEKDLKNVELPSTKIYKKQKNVFRSEDIIEHNLNIEKISFSPRIHRCGKPQHYIKLPKSLNEWKAIFYFAGVMFGDGCVDRIANNDEEVFNKLKSLNNLGIEVERIKRKSSYEIIFKNGKNALINLLKILFDYPSEKKSHNIKIPQILYIAPKELVAEFIKGYFDADGYVNLRQNRIEVISASKEFIEGLSILLLRFEITSKIYEIKKSYKETKKKYYQLNIVGKRNLKNFKNIGFSIKYKEENLNKIIEKSRKSEKYPINKDMKRLRILFGMTRNEVNVSYYAKYENGKEIPSYEIVKKFLNSLKPKNLDKKIKVLEGKERDVNYLKAFESDGLIENGRLTKLGREALNIWKNHEFGKENIDYMKSLIENIAFVEVEDVEIIDYDGYVYDLTTETHNFIANGIVVHNTTLLDKIRKTRVAKREAGGITQHIGASEIPIDVIKRLCGDLLKMLKADLKIPGLLVIDTPGHEAFTSLRKRGGALADIAILVVDINEGFKPQTVEAVNILRQCKTPFVVAANKIDLIPGWNSKEGPFILNFNEKNQHPNALTEFEIRLYENIIKPLNELGFDADLYSRVQDVTKTVCIIPVSAVTGEGIPDLLMMVAGLAQKFLEDRLKLNVEGYAKGTILEVKEEKGLGTTIDAIIYDGIAKRGDYLVVGLPDDVLVTRVKALLKPKPLDEMRDPRDKFKPVNEVTAAAGVKIAAPELDKVIAGCPIRIVPKDKIEEAKEEVMKEVEEAKIEVDDEGILIKADTLGSLEALANELRKAGVKIKKAEVGDVTKKDVIEVASYKQSNPLHGAIVAFNVKILPEAQKEIEKYDIKVFLDNIIYKLVEDFTEWIKKEEERIKYGEFEKLIKPAIIRILPDCIFRQKDPAICGVEVLCGTLRVGAPLMREDGMQLGYVREIKDRGENVKEAKAGKAVSIAIDGRVVLKRHVDEGDYMYVAVPESHVRELYHKYMDRLRNDEKEALLRYMELMQKLTNNIFWGR</sequence>
<proteinExistence type="inferred from homology"/>
<reference key="1">
    <citation type="journal article" date="1996" name="Science">
        <title>Complete genome sequence of the methanogenic archaeon, Methanococcus jannaschii.</title>
        <authorList>
            <person name="Bult C.J."/>
            <person name="White O."/>
            <person name="Olsen G.J."/>
            <person name="Zhou L."/>
            <person name="Fleischmann R.D."/>
            <person name="Sutton G.G."/>
            <person name="Blake J.A."/>
            <person name="FitzGerald L.M."/>
            <person name="Clayton R.A."/>
            <person name="Gocayne J.D."/>
            <person name="Kerlavage A.R."/>
            <person name="Dougherty B.A."/>
            <person name="Tomb J.-F."/>
            <person name="Adams M.D."/>
            <person name="Reich C.I."/>
            <person name="Overbeek R."/>
            <person name="Kirkness E.F."/>
            <person name="Weinstock K.G."/>
            <person name="Merrick J.M."/>
            <person name="Glodek A."/>
            <person name="Scott J.L."/>
            <person name="Geoghagen N.S.M."/>
            <person name="Weidman J.F."/>
            <person name="Fuhrmann J.L."/>
            <person name="Nguyen D."/>
            <person name="Utterback T.R."/>
            <person name="Kelley J.M."/>
            <person name="Peterson J.D."/>
            <person name="Sadow P.W."/>
            <person name="Hanna M.C."/>
            <person name="Cotton M.D."/>
            <person name="Roberts K.M."/>
            <person name="Hurst M.A."/>
            <person name="Kaine B.P."/>
            <person name="Borodovsky M."/>
            <person name="Klenk H.-P."/>
            <person name="Fraser C.M."/>
            <person name="Smith H.O."/>
            <person name="Woese C.R."/>
            <person name="Venter J.C."/>
        </authorList>
    </citation>
    <scope>NUCLEOTIDE SEQUENCE [LARGE SCALE GENOMIC DNA]</scope>
    <source>
        <strain>ATCC 43067 / DSM 2661 / JAL-1 / JCM 10045 / NBRC 100440</strain>
    </source>
</reference>
<feature type="chain" id="PRO_0000014484" description="Probable translation initiation factor IF-2, 1st part" evidence="2">
    <location>
        <begin position="1"/>
        <end position="30"/>
    </location>
</feature>
<feature type="chain" id="PRO_0000014485" description="Mja infB intein" evidence="2">
    <location>
        <begin position="31"/>
        <end position="576"/>
    </location>
</feature>
<feature type="chain" id="PRO_0000014486" description="Probable translation initiation factor IF-2, 2nd part" evidence="2">
    <location>
        <begin position="577"/>
        <end position="1155"/>
    </location>
</feature>
<feature type="domain" description="DOD-type homing endonuclease">
    <location>
        <begin position="237"/>
        <end position="367"/>
    </location>
</feature>
<feature type="domain" description="tr-type G">
    <location>
        <begin position="561"/>
        <end position="781"/>
    </location>
</feature>
<feature type="binding site" evidence="1">
    <location>
        <begin position="634"/>
        <end position="638"/>
    </location>
    <ligand>
        <name>GTP</name>
        <dbReference type="ChEBI" id="CHEBI:37565"/>
    </ligand>
</feature>
<feature type="binding site" evidence="1">
    <location>
        <begin position="688"/>
        <end position="691"/>
    </location>
    <ligand>
        <name>GTP</name>
        <dbReference type="ChEBI" id="CHEBI:37565"/>
    </ligand>
</feature>
<name>IF2P_METJA</name>
<comment type="function">
    <text evidence="1">Function in general translation initiation by promoting the binding of the formylmethionine-tRNA to ribosomes. Seems to function along with eIF-2 (By similarity).</text>
</comment>
<comment type="PTM">
    <text evidence="3">This protein undergoes a protein self splicing that involves a post-translational excision of the intervening region (intein) followed by peptide ligation.</text>
</comment>
<comment type="miscellaneous">
    <text>The intein interrupts the GTP-binding site.</text>
</comment>
<comment type="similarity">
    <text evidence="3">Belongs to the TRAFAC class translation factor GTPase superfamily. Classic translation factor GTPase family. IF-2 subfamily.</text>
</comment>
<protein>
    <recommendedName>
        <fullName>Probable translation initiation factor IF-2</fullName>
    </recommendedName>
    <component>
        <recommendedName>
            <fullName>Mja infB intein</fullName>
        </recommendedName>
        <alternativeName>
            <fullName>Mja IF2 intein</fullName>
        </alternativeName>
    </component>
</protein>
<keyword id="KW-0068">Autocatalytic cleavage</keyword>
<keyword id="KW-0342">GTP-binding</keyword>
<keyword id="KW-0396">Initiation factor</keyword>
<keyword id="KW-0547">Nucleotide-binding</keyword>
<keyword id="KW-0648">Protein biosynthesis</keyword>
<keyword id="KW-0651">Protein splicing</keyword>
<keyword id="KW-1185">Reference proteome</keyword>
<dbReference type="EMBL" id="L77117">
    <property type="protein sequence ID" value="AAB98248.1"/>
    <property type="molecule type" value="Genomic_DNA"/>
</dbReference>
<dbReference type="PIR" id="G64332">
    <property type="entry name" value="G64332"/>
</dbReference>
<dbReference type="RefSeq" id="WP_010869759.1">
    <property type="nucleotide sequence ID" value="NC_000909.1"/>
</dbReference>
<dbReference type="SMR" id="Q57710"/>
<dbReference type="STRING" id="243232.MJ_0262"/>
<dbReference type="PaxDb" id="243232-MJ_0262"/>
<dbReference type="EnsemblBacteria" id="AAB98248">
    <property type="protein sequence ID" value="AAB98248"/>
    <property type="gene ID" value="MJ_0262"/>
</dbReference>
<dbReference type="GeneID" id="1451116"/>
<dbReference type="KEGG" id="mja:MJ_0262"/>
<dbReference type="eggNOG" id="arCOG01560">
    <property type="taxonomic scope" value="Archaea"/>
</dbReference>
<dbReference type="eggNOG" id="arCOG03151">
    <property type="taxonomic scope" value="Archaea"/>
</dbReference>
<dbReference type="eggNOG" id="arCOG03157">
    <property type="taxonomic scope" value="Archaea"/>
</dbReference>
<dbReference type="HOGENOM" id="CLU_002656_3_4_2"/>
<dbReference type="InParanoid" id="Q57710"/>
<dbReference type="OrthoDB" id="30957at2157"/>
<dbReference type="PhylomeDB" id="Q57710"/>
<dbReference type="Proteomes" id="UP000000805">
    <property type="component" value="Chromosome"/>
</dbReference>
<dbReference type="GO" id="GO:0005737">
    <property type="term" value="C:cytoplasm"/>
    <property type="evidence" value="ECO:0000318"/>
    <property type="project" value="GO_Central"/>
</dbReference>
<dbReference type="GO" id="GO:0004519">
    <property type="term" value="F:endonuclease activity"/>
    <property type="evidence" value="ECO:0007669"/>
    <property type="project" value="InterPro"/>
</dbReference>
<dbReference type="GO" id="GO:0005525">
    <property type="term" value="F:GTP binding"/>
    <property type="evidence" value="ECO:0007669"/>
    <property type="project" value="UniProtKB-KW"/>
</dbReference>
<dbReference type="GO" id="GO:0003924">
    <property type="term" value="F:GTPase activity"/>
    <property type="evidence" value="ECO:0007669"/>
    <property type="project" value="UniProtKB-UniRule"/>
</dbReference>
<dbReference type="GO" id="GO:0003743">
    <property type="term" value="F:translation initiation factor activity"/>
    <property type="evidence" value="ECO:0000318"/>
    <property type="project" value="GO_Central"/>
</dbReference>
<dbReference type="GO" id="GO:0016539">
    <property type="term" value="P:intein-mediated protein splicing"/>
    <property type="evidence" value="ECO:0007669"/>
    <property type="project" value="InterPro"/>
</dbReference>
<dbReference type="GO" id="GO:0006413">
    <property type="term" value="P:translational initiation"/>
    <property type="evidence" value="ECO:0000318"/>
    <property type="project" value="GO_Central"/>
</dbReference>
<dbReference type="CDD" id="cd03703">
    <property type="entry name" value="aeIF5B_II"/>
    <property type="match status" value="1"/>
</dbReference>
<dbReference type="CDD" id="cd00081">
    <property type="entry name" value="Hint"/>
    <property type="match status" value="2"/>
</dbReference>
<dbReference type="CDD" id="cd00093">
    <property type="entry name" value="HTH_XRE"/>
    <property type="match status" value="1"/>
</dbReference>
<dbReference type="CDD" id="cd16266">
    <property type="entry name" value="IF2_aeIF5B_IV"/>
    <property type="match status" value="1"/>
</dbReference>
<dbReference type="CDD" id="cd01887">
    <property type="entry name" value="IF2_eIF5B"/>
    <property type="match status" value="1"/>
</dbReference>
<dbReference type="FunFam" id="3.40.50.300:FF:000112">
    <property type="entry name" value="Eukaryotic translation initiation factor 5B"/>
    <property type="match status" value="1"/>
</dbReference>
<dbReference type="FunFam" id="2.40.30.10:FF:000013">
    <property type="entry name" value="eukaryotic translation initiation factor 5B"/>
    <property type="match status" value="1"/>
</dbReference>
<dbReference type="FunFam" id="2.170.16.10:FF:000019">
    <property type="entry name" value="Probable translation initiation factor IF-2"/>
    <property type="match status" value="1"/>
</dbReference>
<dbReference type="FunFam" id="2.170.16.10:FF:000020">
    <property type="entry name" value="Probable translation initiation factor IF-2"/>
    <property type="match status" value="1"/>
</dbReference>
<dbReference type="FunFam" id="2.40.30.10:FF:000225">
    <property type="entry name" value="Probable translation initiation factor IF-2"/>
    <property type="match status" value="1"/>
</dbReference>
<dbReference type="FunFam" id="3.40.50.10050:FF:000009">
    <property type="entry name" value="Probable translation initiation factor IF-2"/>
    <property type="match status" value="1"/>
</dbReference>
<dbReference type="Gene3D" id="2.170.16.10">
    <property type="entry name" value="Hedgehog/Intein (Hint) domain"/>
    <property type="match status" value="2"/>
</dbReference>
<dbReference type="Gene3D" id="3.10.28.10">
    <property type="entry name" value="Homing endonucleases"/>
    <property type="match status" value="1"/>
</dbReference>
<dbReference type="Gene3D" id="3.40.50.300">
    <property type="entry name" value="P-loop containing nucleotide triphosphate hydrolases"/>
    <property type="match status" value="1"/>
</dbReference>
<dbReference type="Gene3D" id="2.40.30.10">
    <property type="entry name" value="Translation factors"/>
    <property type="match status" value="2"/>
</dbReference>
<dbReference type="Gene3D" id="3.40.50.10050">
    <property type="entry name" value="Translation initiation factor IF- 2, domain 3"/>
    <property type="match status" value="1"/>
</dbReference>
<dbReference type="HAMAP" id="MF_00100_A">
    <property type="entry name" value="IF_2_A"/>
    <property type="match status" value="1"/>
</dbReference>
<dbReference type="InterPro" id="IPR001387">
    <property type="entry name" value="Cro/C1-type_HTH"/>
</dbReference>
<dbReference type="InterPro" id="IPR029459">
    <property type="entry name" value="EFTU-type"/>
</dbReference>
<dbReference type="InterPro" id="IPR003586">
    <property type="entry name" value="Hint_dom_C"/>
</dbReference>
<dbReference type="InterPro" id="IPR003587">
    <property type="entry name" value="Hint_dom_N"/>
</dbReference>
<dbReference type="InterPro" id="IPR036844">
    <property type="entry name" value="Hint_dom_sf"/>
</dbReference>
<dbReference type="InterPro" id="IPR027434">
    <property type="entry name" value="Homing_endonucl"/>
</dbReference>
<dbReference type="InterPro" id="IPR006142">
    <property type="entry name" value="INTEIN"/>
</dbReference>
<dbReference type="InterPro" id="IPR030934">
    <property type="entry name" value="Intein_C"/>
</dbReference>
<dbReference type="InterPro" id="IPR004042">
    <property type="entry name" value="Intein_endonuc_central"/>
</dbReference>
<dbReference type="InterPro" id="IPR006141">
    <property type="entry name" value="Intein_N"/>
</dbReference>
<dbReference type="InterPro" id="IPR004860">
    <property type="entry name" value="LAGLIDADG_dom"/>
</dbReference>
<dbReference type="InterPro" id="IPR027417">
    <property type="entry name" value="P-loop_NTPase"/>
</dbReference>
<dbReference type="InterPro" id="IPR005225">
    <property type="entry name" value="Small_GTP-bd"/>
</dbReference>
<dbReference type="InterPro" id="IPR000795">
    <property type="entry name" value="T_Tr_GTP-bd_dom"/>
</dbReference>
<dbReference type="InterPro" id="IPR004544">
    <property type="entry name" value="TF_aIF-2_arc"/>
</dbReference>
<dbReference type="InterPro" id="IPR015760">
    <property type="entry name" value="TIF_IF2"/>
</dbReference>
<dbReference type="InterPro" id="IPR023115">
    <property type="entry name" value="TIF_IF2_dom3"/>
</dbReference>
<dbReference type="InterPro" id="IPR036925">
    <property type="entry name" value="TIF_IF2_dom3_sf"/>
</dbReference>
<dbReference type="InterPro" id="IPR009000">
    <property type="entry name" value="Transl_B-barrel_sf"/>
</dbReference>
<dbReference type="InterPro" id="IPR039518">
    <property type="entry name" value="WhiA_LAGLIDADG_dom"/>
</dbReference>
<dbReference type="NCBIfam" id="TIGR00491">
    <property type="entry name" value="aIF-2"/>
    <property type="match status" value="1"/>
</dbReference>
<dbReference type="NCBIfam" id="TIGR01443">
    <property type="entry name" value="intein_Cterm"/>
    <property type="match status" value="1"/>
</dbReference>
<dbReference type="NCBIfam" id="TIGR01445">
    <property type="entry name" value="intein_Nterm"/>
    <property type="match status" value="1"/>
</dbReference>
<dbReference type="NCBIfam" id="NF003078">
    <property type="entry name" value="PRK04004.1"/>
    <property type="match status" value="1"/>
</dbReference>
<dbReference type="NCBIfam" id="NF011418">
    <property type="entry name" value="PRK14845.1"/>
    <property type="match status" value="1"/>
</dbReference>
<dbReference type="NCBIfam" id="TIGR00231">
    <property type="entry name" value="small_GTP"/>
    <property type="match status" value="1"/>
</dbReference>
<dbReference type="PANTHER" id="PTHR43381:SF4">
    <property type="entry name" value="EUKARYOTIC TRANSLATION INITIATION FACTOR 5B"/>
    <property type="match status" value="1"/>
</dbReference>
<dbReference type="PANTHER" id="PTHR43381">
    <property type="entry name" value="TRANSLATION INITIATION FACTOR IF-2-RELATED"/>
    <property type="match status" value="1"/>
</dbReference>
<dbReference type="Pfam" id="PF00009">
    <property type="entry name" value="GTP_EFTU"/>
    <property type="match status" value="1"/>
</dbReference>
<dbReference type="Pfam" id="PF14578">
    <property type="entry name" value="GTP_EFTU_D4"/>
    <property type="match status" value="1"/>
</dbReference>
<dbReference type="Pfam" id="PF11987">
    <property type="entry name" value="IF-2"/>
    <property type="match status" value="1"/>
</dbReference>
<dbReference type="Pfam" id="PF14890">
    <property type="entry name" value="Intein_splicing"/>
    <property type="match status" value="1"/>
</dbReference>
<dbReference type="Pfam" id="PF14528">
    <property type="entry name" value="LAGLIDADG_3"/>
    <property type="match status" value="1"/>
</dbReference>
<dbReference type="Pfam" id="PF14527">
    <property type="entry name" value="LAGLIDADG_WhiA"/>
    <property type="match status" value="1"/>
</dbReference>
<dbReference type="PRINTS" id="PR00379">
    <property type="entry name" value="INTEIN"/>
</dbReference>
<dbReference type="SMART" id="SM00305">
    <property type="entry name" value="HintC"/>
    <property type="match status" value="1"/>
</dbReference>
<dbReference type="SMART" id="SM00306">
    <property type="entry name" value="HintN"/>
    <property type="match status" value="1"/>
</dbReference>
<dbReference type="SUPFAM" id="SSF51294">
    <property type="entry name" value="Hedgehog/intein (Hint) domain"/>
    <property type="match status" value="1"/>
</dbReference>
<dbReference type="SUPFAM" id="SSF55608">
    <property type="entry name" value="Homing endonucleases"/>
    <property type="match status" value="1"/>
</dbReference>
<dbReference type="SUPFAM" id="SSF52156">
    <property type="entry name" value="Initiation factor IF2/eIF5b, domain 3"/>
    <property type="match status" value="1"/>
</dbReference>
<dbReference type="SUPFAM" id="SSF52540">
    <property type="entry name" value="P-loop containing nucleoside triphosphate hydrolases"/>
    <property type="match status" value="1"/>
</dbReference>
<dbReference type="SUPFAM" id="SSF50447">
    <property type="entry name" value="Translation proteins"/>
    <property type="match status" value="1"/>
</dbReference>
<dbReference type="PROSITE" id="PS51722">
    <property type="entry name" value="G_TR_2"/>
    <property type="match status" value="1"/>
</dbReference>
<dbReference type="PROSITE" id="PS50818">
    <property type="entry name" value="INTEIN_C_TER"/>
    <property type="match status" value="1"/>
</dbReference>
<dbReference type="PROSITE" id="PS50819">
    <property type="entry name" value="INTEIN_ENDONUCLEASE"/>
    <property type="match status" value="1"/>
</dbReference>
<dbReference type="PROSITE" id="PS50817">
    <property type="entry name" value="INTEIN_N_TER"/>
    <property type="match status" value="1"/>
</dbReference>
<accession>Q57710</accession>
<organism>
    <name type="scientific">Methanocaldococcus jannaschii (strain ATCC 43067 / DSM 2661 / JAL-1 / JCM 10045 / NBRC 100440)</name>
    <name type="common">Methanococcus jannaschii</name>
    <dbReference type="NCBI Taxonomy" id="243232"/>
    <lineage>
        <taxon>Archaea</taxon>
        <taxon>Methanobacteriati</taxon>
        <taxon>Methanobacteriota</taxon>
        <taxon>Methanomada group</taxon>
        <taxon>Methanococci</taxon>
        <taxon>Methanococcales</taxon>
        <taxon>Methanocaldococcaceae</taxon>
        <taxon>Methanocaldococcus</taxon>
    </lineage>
</organism>
<gene>
    <name type="primary">infB</name>
    <name type="ordered locus">MJ0262</name>
</gene>